<name>TSP12_CAEEL</name>
<keyword id="KW-1003">Cell membrane</keyword>
<keyword id="KW-0968">Cytoplasmic vesicle</keyword>
<keyword id="KW-0967">Endosome</keyword>
<keyword id="KW-0325">Glycoprotein</keyword>
<keyword id="KW-0333">Golgi apparatus</keyword>
<keyword id="KW-0472">Membrane</keyword>
<keyword id="KW-1185">Reference proteome</keyword>
<keyword id="KW-0812">Transmembrane</keyword>
<keyword id="KW-1133">Transmembrane helix</keyword>
<organism evidence="11">
    <name type="scientific">Caenorhabditis elegans</name>
    <dbReference type="NCBI Taxonomy" id="6239"/>
    <lineage>
        <taxon>Eukaryota</taxon>
        <taxon>Metazoa</taxon>
        <taxon>Ecdysozoa</taxon>
        <taxon>Nematoda</taxon>
        <taxon>Chromadorea</taxon>
        <taxon>Rhabditida</taxon>
        <taxon>Rhabditina</taxon>
        <taxon>Rhabditomorpha</taxon>
        <taxon>Rhabditoidea</taxon>
        <taxon>Rhabditidae</taxon>
        <taxon>Peloderinae</taxon>
        <taxon>Caenorhabditis</taxon>
    </lineage>
</organism>
<accession>Q22495</accession>
<comment type="function">
    <text evidence="4 5 6 7 8">Functions redundantly with tsp-14 isoform a to regulate body size, embryonic and vulva development (PubMed:25978409, PubMed:28068334, PubMed:35089916). Functions redundantly with tsp-14 (isoforms a and b) to regulate cell fate specification in the postembryonic mesodermal M lineage and male development (PubMed:25978409, PubMed:28068334, PubMed:35089916). May regulate BMP-like Sma/Mab signaling by mediating protease sup-17 trafficking to the cell surface (PubMed:28068334). Together with tsp-14, functions redundantly to maintain cell surface levels of the BMP type II receptor daf-4 (but not BMP type I receptor sma-6), probably by regulating endosomal sorting of receptors and their targeting to degradative lysosomes (PubMed:31988138). Together with tsp-14 involved in maintaining the structural and functional integrity of the endosomal network (PubMed:31988138). Together with tsp-14, probably acts by modulating the activation of glp-1, a Notch-like receptor, to regulate germline maturation (PubMed:20220101). Probably acts by modulating the activation of lin-12, a Notch-like receptor, to regulate cell fate specification such as the anchor cell/ventral uterine precursor cell decision (PubMed:20220101).</text>
</comment>
<comment type="subunit">
    <text evidence="6">May interact with protease sup-17; the interaction promotes sup-17 cell membrane localization.</text>
</comment>
<comment type="subcellular location">
    <subcellularLocation>
        <location evidence="6">Cell membrane</location>
        <topology evidence="3">Multi-pass membrane protein</topology>
    </subcellularLocation>
    <subcellularLocation>
        <location evidence="6">Cytoplasmic vesicle membrane</location>
        <topology evidence="3">Multi-pass membrane protein</topology>
    </subcellularLocation>
    <subcellularLocation>
        <location evidence="7">Endosome membrane</location>
        <topology evidence="3">Multi-pass membrane protein</topology>
    </subcellularLocation>
    <subcellularLocation>
        <location evidence="7">Early endosome membrane</location>
        <topology evidence="3">Multi-pass membrane protein</topology>
    </subcellularLocation>
    <subcellularLocation>
        <location evidence="7">Late endosome membrane</location>
        <topology evidence="3">Multi-pass membrane protein</topology>
    </subcellularLocation>
    <subcellularLocation>
        <location evidence="7">Recycling endosome membrane</location>
        <topology evidence="3">Multi-pass membrane protein</topology>
    </subcellularLocation>
    <subcellularLocation>
        <location>Golgi apparatus</location>
        <location>trans-Golgi network membrane</location>
        <topology evidence="3">Multi-pass membrane protein</topology>
    </subcellularLocation>
    <text evidence="9">Often in close juxtaposition to the retromer but not part of it, suggesting separate microdomains of the same endosome.</text>
</comment>
<comment type="tissue specificity">
    <text evidence="6">Expressed in the germline.</text>
</comment>
<comment type="developmental stage">
    <text evidence="6 7">Expressed in embryos, larvae and in adults. Expressed in the developing vulva at the L4 larval stage and in the hypodermis at the L3 larval stage (PubMed:28068334). Expressed in hypodermis at larval stage L4 (PubMed:31988138).</text>
</comment>
<comment type="disruption phenotype">
    <text evidence="4 6 7 8">Viable and fertile (PubMed:28068334). In embryos, loss of protease sup-17 cell membrane localization (PubMed:28068334). No effect on tsp-14 protein levels or subcellular localization (PubMed:31988138). In a tsp-14 (jj95) mutant background, reduced RAD-SMAD reporter expression, a reporter system for the sma-6/daf-4 BMP-like pathway (PubMed:28068334). In a tsp-14 (jj95) or tsp-14 (jj304) isoform a-specific mutant background, exhibits vulva morphogenesis defects resulting in vulvaless or protruding vulva phenotype, impaired egg-laying with severe maternal effect embryonic lethality and smaller body size (PubMed:28068334, PubMed:35089916). In a tsp-14 (jj95) mutant background, males have severe tail defects including crumpled spicules, fused and shortened sensory rays and smaller fans (PubMed:28068334). F1 progeny die at the late embryonic stage with defects in ventral enclosure (PubMed:28068334). Reduces daf-4 cell surface levels in hypodermal cells and mis-localization to lysosomes and lysosome-related organelles (PubMed:31988138). Alters endosomal morphology (PubMed:31988138). In a sma-9 (cc604) and tsp-14 (jj95) double mutant background, restores the production of the 2 M lineage-derived coelomocytes (PubMed:28068334). In a tsp-14 (jj317) isoform b-specific knockdown, partially restores the production of the 2 M lineage-derived coelomocytes (PubMed:35089916). In a glp-1 (ar202) mutant background, partially restores normal fertility (PubMed:20220101). In a glp-1 (e2142) mutant background, enhances embryonic lethality (PubMed:20220101). In a sup-17 (n1258) or adm-4 (ok265) mutant background, causes lethality at various developmental stages (PubMed:20220101). In a lin-12 (n302) mutant background, restores egg-laying function (PubMed:20220101).</text>
</comment>
<comment type="similarity">
    <text evidence="1 3">Belongs to the tetraspanin (TM4SF) family.</text>
</comment>
<feature type="chain" id="PRO_0000441400" description="Tetraspanin-12">
    <location>
        <begin position="1"/>
        <end position="308"/>
    </location>
</feature>
<feature type="topological domain" description="Cytoplasmic" evidence="10">
    <location>
        <begin position="1"/>
        <end position="41"/>
    </location>
</feature>
<feature type="transmembrane region" description="Helical" evidence="1">
    <location>
        <begin position="42"/>
        <end position="62"/>
    </location>
</feature>
<feature type="topological domain" description="Extracellular" evidence="10">
    <location>
        <begin position="63"/>
        <end position="86"/>
    </location>
</feature>
<feature type="transmembrane region" description="Helical" evidence="1">
    <location>
        <begin position="87"/>
        <end position="107"/>
    </location>
</feature>
<feature type="topological domain" description="Cytoplasmic" evidence="10">
    <location>
        <begin position="108"/>
        <end position="112"/>
    </location>
</feature>
<feature type="transmembrane region" description="Helical" evidence="1">
    <location>
        <begin position="113"/>
        <end position="133"/>
    </location>
</feature>
<feature type="topological domain" description="Extracellular" evidence="10">
    <location>
        <begin position="134"/>
        <end position="268"/>
    </location>
</feature>
<feature type="transmembrane region" description="Helical" evidence="1">
    <location>
        <begin position="269"/>
        <end position="289"/>
    </location>
</feature>
<feature type="topological domain" description="Cytoplasmic" evidence="10">
    <location>
        <begin position="290"/>
        <end position="308"/>
    </location>
</feature>
<feature type="glycosylation site" description="N-linked (GlcNAc...) asparagine" evidence="2">
    <location>
        <position position="213"/>
    </location>
</feature>
<protein>
    <recommendedName>
        <fullName evidence="10">Tetraspanin-12</fullName>
    </recommendedName>
</protein>
<evidence type="ECO:0000255" key="1"/>
<evidence type="ECO:0000255" key="2">
    <source>
        <dbReference type="PROSITE-ProRule" id="PRU00498"/>
    </source>
</evidence>
<evidence type="ECO:0000255" key="3">
    <source>
        <dbReference type="RuleBase" id="RU361218"/>
    </source>
</evidence>
<evidence type="ECO:0000269" key="4">
    <source>
    </source>
</evidence>
<evidence type="ECO:0000269" key="5">
    <source>
    </source>
</evidence>
<evidence type="ECO:0000269" key="6">
    <source>
    </source>
</evidence>
<evidence type="ECO:0000269" key="7">
    <source>
    </source>
</evidence>
<evidence type="ECO:0000269" key="8">
    <source>
    </source>
</evidence>
<evidence type="ECO:0000303" key="9">
    <source>
    </source>
</evidence>
<evidence type="ECO:0000305" key="10"/>
<evidence type="ECO:0000312" key="11">
    <source>
        <dbReference type="Proteomes" id="UP000001940"/>
    </source>
</evidence>
<evidence type="ECO:0000312" key="12">
    <source>
        <dbReference type="WormBase" id="T14G10.6"/>
    </source>
</evidence>
<dbReference type="EMBL" id="BX284604">
    <property type="protein sequence ID" value="CAA93092.1"/>
    <property type="molecule type" value="Genomic_DNA"/>
</dbReference>
<dbReference type="PIR" id="T24912">
    <property type="entry name" value="T24912"/>
</dbReference>
<dbReference type="RefSeq" id="NP_501853.1">
    <property type="nucleotide sequence ID" value="NM_069452.5"/>
</dbReference>
<dbReference type="SMR" id="Q22495"/>
<dbReference type="FunCoup" id="Q22495">
    <property type="interactions" value="2035"/>
</dbReference>
<dbReference type="IntAct" id="Q22495">
    <property type="interactions" value="1"/>
</dbReference>
<dbReference type="STRING" id="6239.T14G10.6.1"/>
<dbReference type="GlyCosmos" id="Q22495">
    <property type="glycosylation" value="1 site, No reported glycans"/>
</dbReference>
<dbReference type="PaxDb" id="6239-T14G10.6"/>
<dbReference type="EnsemblMetazoa" id="T14G10.6.1">
    <property type="protein sequence ID" value="T14G10.6.1"/>
    <property type="gene ID" value="WBGene00006638"/>
</dbReference>
<dbReference type="GeneID" id="177890"/>
<dbReference type="KEGG" id="cel:CELE_T14G10.6"/>
<dbReference type="UCSC" id="T14G10.6">
    <property type="organism name" value="c. elegans"/>
</dbReference>
<dbReference type="AGR" id="WB:WBGene00006638"/>
<dbReference type="CTD" id="177890"/>
<dbReference type="WormBase" id="T14G10.6">
    <property type="protein sequence ID" value="CE06452"/>
    <property type="gene ID" value="WBGene00006638"/>
    <property type="gene designation" value="tsp-12"/>
</dbReference>
<dbReference type="eggNOG" id="KOG3882">
    <property type="taxonomic scope" value="Eukaryota"/>
</dbReference>
<dbReference type="GeneTree" id="ENSGT00940000168794"/>
<dbReference type="HOGENOM" id="CLU_055524_0_0_1"/>
<dbReference type="InParanoid" id="Q22495"/>
<dbReference type="OMA" id="DPMYGFI"/>
<dbReference type="OrthoDB" id="2014092at2759"/>
<dbReference type="PhylomeDB" id="Q22495"/>
<dbReference type="Reactome" id="R-CEL-6798695">
    <property type="pathway name" value="Neutrophil degranulation"/>
</dbReference>
<dbReference type="PRO" id="PR:Q22495"/>
<dbReference type="Proteomes" id="UP000001940">
    <property type="component" value="Chromosome IV"/>
</dbReference>
<dbReference type="Bgee" id="WBGene00006638">
    <property type="expression patterns" value="Expressed in embryo and 4 other cell types or tissues"/>
</dbReference>
<dbReference type="GO" id="GO:0030659">
    <property type="term" value="C:cytoplasmic vesicle membrane"/>
    <property type="evidence" value="ECO:0000314"/>
    <property type="project" value="UniProtKB"/>
</dbReference>
<dbReference type="GO" id="GO:0031901">
    <property type="term" value="C:early endosome membrane"/>
    <property type="evidence" value="ECO:0007669"/>
    <property type="project" value="UniProtKB-SubCell"/>
</dbReference>
<dbReference type="GO" id="GO:0005794">
    <property type="term" value="C:Golgi apparatus"/>
    <property type="evidence" value="ECO:0007669"/>
    <property type="project" value="UniProtKB-SubCell"/>
</dbReference>
<dbReference type="GO" id="GO:0031902">
    <property type="term" value="C:late endosome membrane"/>
    <property type="evidence" value="ECO:0007669"/>
    <property type="project" value="UniProtKB-SubCell"/>
</dbReference>
<dbReference type="GO" id="GO:0005886">
    <property type="term" value="C:plasma membrane"/>
    <property type="evidence" value="ECO:0000314"/>
    <property type="project" value="UniProtKB"/>
</dbReference>
<dbReference type="GO" id="GO:0055038">
    <property type="term" value="C:recycling endosome membrane"/>
    <property type="evidence" value="ECO:0007669"/>
    <property type="project" value="UniProtKB-SubCell"/>
</dbReference>
<dbReference type="GO" id="GO:0002020">
    <property type="term" value="F:protease binding"/>
    <property type="evidence" value="ECO:0000353"/>
    <property type="project" value="UniProtKB"/>
</dbReference>
<dbReference type="GO" id="GO:0045138">
    <property type="term" value="P:nematode male tail tip morphogenesis"/>
    <property type="evidence" value="ECO:0000316"/>
    <property type="project" value="UniProtKB"/>
</dbReference>
<dbReference type="GO" id="GO:1901046">
    <property type="term" value="P:positive regulation of egg-laying behavior"/>
    <property type="evidence" value="ECO:0000316"/>
    <property type="project" value="UniProtKB"/>
</dbReference>
<dbReference type="GO" id="GO:0040019">
    <property type="term" value="P:positive regulation of embryonic development"/>
    <property type="evidence" value="ECO:0000316"/>
    <property type="project" value="UniProtKB"/>
</dbReference>
<dbReference type="GO" id="GO:0030511">
    <property type="term" value="P:positive regulation of transforming growth factor beta receptor signaling pathway"/>
    <property type="evidence" value="ECO:0000316"/>
    <property type="project" value="UniProtKB"/>
</dbReference>
<dbReference type="GO" id="GO:0040026">
    <property type="term" value="P:positive regulation of vulval development"/>
    <property type="evidence" value="ECO:0000316"/>
    <property type="project" value="UniProtKB"/>
</dbReference>
<dbReference type="GO" id="GO:0072659">
    <property type="term" value="P:protein localization to plasma membrane"/>
    <property type="evidence" value="ECO:0000315"/>
    <property type="project" value="UniProtKB"/>
</dbReference>
<dbReference type="GO" id="GO:0042661">
    <property type="term" value="P:regulation of mesodermal cell fate specification"/>
    <property type="evidence" value="ECO:0000316"/>
    <property type="project" value="UniProtKB"/>
</dbReference>
<dbReference type="Gene3D" id="1.10.1450.10">
    <property type="entry name" value="Tetraspanin"/>
    <property type="match status" value="1"/>
</dbReference>
<dbReference type="InterPro" id="IPR018499">
    <property type="entry name" value="Tetraspanin/Peripherin"/>
</dbReference>
<dbReference type="InterPro" id="IPR000301">
    <property type="entry name" value="Tetraspanin_animals"/>
</dbReference>
<dbReference type="InterPro" id="IPR008952">
    <property type="entry name" value="Tetraspanin_EC2_sf"/>
</dbReference>
<dbReference type="PANTHER" id="PTHR19282">
    <property type="entry name" value="TETRASPANIN"/>
    <property type="match status" value="1"/>
</dbReference>
<dbReference type="PANTHER" id="PTHR19282:SF431">
    <property type="entry name" value="TETRASPANIN 26A, ISOFORM B-RELATED"/>
    <property type="match status" value="1"/>
</dbReference>
<dbReference type="Pfam" id="PF00335">
    <property type="entry name" value="Tetraspanin"/>
    <property type="match status" value="1"/>
</dbReference>
<dbReference type="PIRSF" id="PIRSF002419">
    <property type="entry name" value="Tetraspanin"/>
    <property type="match status" value="1"/>
</dbReference>
<dbReference type="PRINTS" id="PR00259">
    <property type="entry name" value="TMFOUR"/>
</dbReference>
<dbReference type="SUPFAM" id="SSF48652">
    <property type="entry name" value="Tetraspanin"/>
    <property type="match status" value="1"/>
</dbReference>
<reference evidence="11" key="1">
    <citation type="journal article" date="1998" name="Science">
        <title>Genome sequence of the nematode C. elegans: a platform for investigating biology.</title>
        <authorList>
            <consortium name="The C. elegans sequencing consortium"/>
        </authorList>
    </citation>
    <scope>NUCLEOTIDE SEQUENCE [LARGE SCALE GENOMIC DNA]</scope>
    <source>
        <strain evidence="11">Bristol N2</strain>
    </source>
</reference>
<reference evidence="10" key="2">
    <citation type="journal article" date="2010" name="Proc. Natl. Acad. Sci. U.S.A.">
        <title>A conserved tetraspanin subfamily promotes Notch signaling in Caenorhabditis elegans and in human cells.</title>
        <authorList>
            <person name="Dunn C.D."/>
            <person name="Sulis M.L."/>
            <person name="Ferrando A.A."/>
            <person name="Greenwald I."/>
        </authorList>
    </citation>
    <scope>FUNCTION</scope>
    <scope>DISRUPTION PHENOTYPE</scope>
</reference>
<reference evidence="10" key="3">
    <citation type="journal article" date="2015" name="PLoS Genet.">
        <title>Promotion of bone morphogenetic protein signaling by tetraspanins and glycosphingolipids.</title>
        <authorList>
            <person name="Liu Z."/>
            <person name="Shi H."/>
            <person name="Szymczak L.C."/>
            <person name="Aydin T."/>
            <person name="Yun S."/>
            <person name="Constas K."/>
            <person name="Schaeffer A."/>
            <person name="Ranjan S."/>
            <person name="Kubba S."/>
            <person name="Alam E."/>
            <person name="McMahon D.E."/>
            <person name="He J."/>
            <person name="Shwartz N."/>
            <person name="Tian C."/>
            <person name="Plavskin Y."/>
            <person name="Lindy A."/>
            <person name="Dad N.A."/>
            <person name="Sheth S."/>
            <person name="Amin N.M."/>
            <person name="Zimmerman S."/>
            <person name="Liu D."/>
            <person name="Schwarz E.M."/>
            <person name="Smith H."/>
            <person name="Krause M.W."/>
            <person name="Liu J."/>
        </authorList>
    </citation>
    <scope>FUNCTION</scope>
</reference>
<reference evidence="10" key="4">
    <citation type="journal article" date="2017" name="PLoS Genet.">
        <title>Two paralogous tetraspanins TSP-12 and TSP-14 function with the ADAM10 metalloprotease SUP-17 to promote BMP signaling in caenorhabditis elegans.</title>
        <authorList>
            <person name="Wang L."/>
            <person name="Liu Z."/>
            <person name="Shi H."/>
            <person name="Liu J."/>
        </authorList>
    </citation>
    <scope>FUNCTION</scope>
    <scope>INTERACTION WITH SUP-17</scope>
    <scope>SUBCELLULAR LOCATION</scope>
    <scope>TISSUE SPECIFICITY</scope>
    <scope>DEVELOPMENTAL STAGE</scope>
    <scope>DISRUPTION PHENOTYPE</scope>
</reference>
<reference key="5">
    <citation type="journal article" date="2020" name="Proc. Natl. Acad. Sci. U.S.A.">
        <title>Tetraspanins TSP-12 and TSP-14 function redundantly to regulate the trafficking of the type II BMP receptor in Caenorhabditis elegans.</title>
        <authorList>
            <person name="Liu Z."/>
            <person name="Shi H."/>
            <person name="Nzessi A.K."/>
            <person name="Norris A."/>
            <person name="Grant B.D."/>
            <person name="Liu J."/>
        </authorList>
    </citation>
    <scope>FUNCTION</scope>
    <scope>SUBCELLULAR LOCATION</scope>
    <scope>DEVELOPMENTAL STAGE</scope>
    <scope>DISRUPTION PHENOTYPE</scope>
</reference>
<reference key="6">
    <citation type="journal article" date="2022" name="PLoS Genet.">
        <title>The C. elegans TspanC8 tetraspanin TSP-14 exhibits isoform-specific localization and function.</title>
        <authorList>
            <person name="Liu Z."/>
            <person name="Shi H."/>
            <person name="Liu J."/>
        </authorList>
    </citation>
    <scope>FUNCTION</scope>
    <scope>DISRUPTION PHENOTYPE</scope>
</reference>
<sequence>MANRRQPVQHRAQQRVYRQSQIRYAPGAGGESEISCCVKYSVFSFNVIFFLLGFGLLLFGVWAQIEKNTFVNMLSKASKLYLDPTWPLLIVGFLTFIIGFSGCVGSLRENTSFLTFYSTLLGLLLIAEFSAGVFAYACRDQLDNYIRNLLNDVVVGYRDDPDLQLLIDSMQETWMCCGINGADDWDRNTYFSIEAREVASPEAGGVPFSCCINSSKLEFKNYFCGHGVRLKPESHMAAHLAAQRVMAHTASIYTEGCLPKLQLWLNNNMLLVAVSMVIIAIIQVLGICFAQNLKSDILAQRAKWYYTH</sequence>
<gene>
    <name evidence="12" type="primary">tsp-12</name>
    <name evidence="12" type="ORF">T14G10.6</name>
</gene>
<proteinExistence type="evidence at protein level"/>